<evidence type="ECO:0000250" key="1"/>
<evidence type="ECO:0000250" key="2">
    <source>
        <dbReference type="UniProtKB" id="P0C0S5"/>
    </source>
</evidence>
<evidence type="ECO:0000256" key="3">
    <source>
        <dbReference type="SAM" id="MobiDB-lite"/>
    </source>
</evidence>
<evidence type="ECO:0000305" key="4"/>
<evidence type="ECO:0000312" key="5">
    <source>
        <dbReference type="MGI" id="MGI:3606192"/>
    </source>
</evidence>
<evidence type="ECO:0007744" key="6">
    <source>
    </source>
</evidence>
<organism>
    <name type="scientific">Mus musculus</name>
    <name type="common">Mouse</name>
    <dbReference type="NCBI Taxonomy" id="10090"/>
    <lineage>
        <taxon>Eukaryota</taxon>
        <taxon>Metazoa</taxon>
        <taxon>Chordata</taxon>
        <taxon>Craniata</taxon>
        <taxon>Vertebrata</taxon>
        <taxon>Euteleostomi</taxon>
        <taxon>Mammalia</taxon>
        <taxon>Eutheria</taxon>
        <taxon>Euarchontoglires</taxon>
        <taxon>Glires</taxon>
        <taxon>Rodentia</taxon>
        <taxon>Myomorpha</taxon>
        <taxon>Muroidea</taxon>
        <taxon>Muridae</taxon>
        <taxon>Murinae</taxon>
        <taxon>Mus</taxon>
        <taxon>Mus</taxon>
    </lineage>
</organism>
<gene>
    <name evidence="5" type="primary">H2aj</name>
</gene>
<comment type="function">
    <text>Core component of nucleosome. Nucleosomes wrap and compact DNA into chromatin, limiting DNA accessibility to the cellular machineries which require DNA as a template. Histones thereby play a central role in transcription regulation, DNA repair, DNA replication and chromosomal stability. DNA accessibility is regulated via a complex set of post-translational modifications of histones, also called histone code, and nucleosome remodeling.</text>
</comment>
<comment type="subunit">
    <text>The nucleosome is a histone octamer containing two molecules each of H2A, H2B, H3 and H4 assembled in one H3-H4 heterotetramer and two H2A-H2B heterodimers. The octamer wraps approximately 147 bp of DNA.</text>
</comment>
<comment type="subcellular location">
    <subcellularLocation>
        <location evidence="1">Nucleus</location>
    </subcellularLocation>
    <subcellularLocation>
        <location evidence="1">Chromosome</location>
    </subcellularLocation>
</comment>
<comment type="PTM">
    <text evidence="1">Monoubiquitination of Lys-120 (H2AXK119ub) gives a specific tag for epigenetic transcriptional repression. Following DNA double-strand breaks (DSBs), it is ubiquitinated through 'Lys-63' linkage of ubiquitin moieties (By similarity).</text>
</comment>
<comment type="PTM">
    <text evidence="1">Glutamine methylation at Gln-105 (H2AQ104me) by FBL is specifically dedicated to polymerase I. It is present at 35S ribosomal DNA locus and impairs binding of the FACT complex (By similarity).</text>
</comment>
<comment type="PTM">
    <text evidence="1">Phosphorylation on Ser-2 (H2AS1ph) is enhanced during mitosis. Phosphorylation on Ser-2 by RPS6KA5/MSK1 directly represses transcription. Acetylation of H3 inhibits Ser-2 phosphorylation by RPS6KA5/MSK1. Phosphorylation at Thr-121 (H2AT120ph) by DCAF1 is present in the regulatory region of many tumor suppresor genes and down-regulates their transcription (By similarity).</text>
</comment>
<comment type="similarity">
    <text evidence="4">Belongs to the histone H2A family.</text>
</comment>
<proteinExistence type="evidence at protein level"/>
<sequence>MSGRGKQGGKVRAKAKSRSSRAGLQFPVGRVHRLLRKGNYAERVGAGAPVYLAAVLEYLTAEILELAGNAARDNKKTRIIPRHLQLAIRNDEELNKLLGRVTIAQGGVLPNIQAVLLPKKTESQKVKSK</sequence>
<protein>
    <recommendedName>
        <fullName>Histone H2A.J</fullName>
        <shortName>H2a/j</shortName>
    </recommendedName>
</protein>
<name>H2AJ_MOUSE</name>
<accession>Q8R1M2</accession>
<dbReference type="EMBL" id="AK053755">
    <property type="protein sequence ID" value="BAC35508.1"/>
    <property type="molecule type" value="mRNA"/>
</dbReference>
<dbReference type="EMBL" id="BC024397">
    <property type="protein sequence ID" value="AAH24397.1"/>
    <property type="molecule type" value="mRNA"/>
</dbReference>
<dbReference type="EMBL" id="BC099606">
    <property type="protein sequence ID" value="AAH99606.1"/>
    <property type="molecule type" value="mRNA"/>
</dbReference>
<dbReference type="CCDS" id="CCDS20654.1"/>
<dbReference type="RefSeq" id="NP_808356.1">
    <property type="nucleotide sequence ID" value="NM_177688.4"/>
</dbReference>
<dbReference type="SMR" id="Q8R1M2"/>
<dbReference type="BioGRID" id="231262">
    <property type="interactions" value="2"/>
</dbReference>
<dbReference type="FunCoup" id="Q8R1M2">
    <property type="interactions" value="749"/>
</dbReference>
<dbReference type="IntAct" id="Q8R1M2">
    <property type="interactions" value="2"/>
</dbReference>
<dbReference type="STRING" id="10090.ENSMUSP00000074142"/>
<dbReference type="GlyGen" id="Q8R1M2">
    <property type="glycosylation" value="1 site, 1 O-linked glycan (1 site)"/>
</dbReference>
<dbReference type="iPTMnet" id="Q8R1M2"/>
<dbReference type="PhosphoSitePlus" id="Q8R1M2"/>
<dbReference type="SwissPalm" id="Q8R1M2"/>
<dbReference type="jPOST" id="Q8R1M2"/>
<dbReference type="PaxDb" id="10090-ENSMUSP00000074142"/>
<dbReference type="PeptideAtlas" id="Q8R1M2"/>
<dbReference type="TopDownProteomics" id="Q8R1M2"/>
<dbReference type="Antibodypedia" id="54929">
    <property type="antibodies" value="127 antibodies from 14 providers"/>
</dbReference>
<dbReference type="DNASU" id="232440"/>
<dbReference type="Ensembl" id="ENSMUST00000074556.7">
    <property type="protein sequence ID" value="ENSMUSP00000074142.5"/>
    <property type="gene ID" value="ENSMUSG00000060032.7"/>
</dbReference>
<dbReference type="GeneID" id="232440"/>
<dbReference type="KEGG" id="mmu:232440"/>
<dbReference type="UCSC" id="uc009eme.1">
    <property type="organism name" value="mouse"/>
</dbReference>
<dbReference type="AGR" id="MGI:3606192"/>
<dbReference type="CTD" id="55766"/>
<dbReference type="MGI" id="MGI:3606192">
    <property type="gene designation" value="H2aj"/>
</dbReference>
<dbReference type="VEuPathDB" id="HostDB:ENSMUSG00000060032"/>
<dbReference type="eggNOG" id="KOG1756">
    <property type="taxonomic scope" value="Eukaryota"/>
</dbReference>
<dbReference type="GeneTree" id="ENSGT00940000153118"/>
<dbReference type="HOGENOM" id="CLU_062828_3_1_1"/>
<dbReference type="InParanoid" id="Q8R1M2"/>
<dbReference type="OMA" id="HNSETHE"/>
<dbReference type="OrthoDB" id="1104503at2759"/>
<dbReference type="PhylomeDB" id="Q8R1M2"/>
<dbReference type="TreeFam" id="TF300137"/>
<dbReference type="Reactome" id="R-MMU-110330">
    <property type="pathway name" value="Recognition and association of DNA glycosylase with site containing an affected purine"/>
</dbReference>
<dbReference type="Reactome" id="R-MMU-110331">
    <property type="pathway name" value="Cleavage of the damaged purine"/>
</dbReference>
<dbReference type="Reactome" id="R-MMU-212300">
    <property type="pathway name" value="PRC2 methylates histones and DNA"/>
</dbReference>
<dbReference type="Reactome" id="R-MMU-2299718">
    <property type="pathway name" value="Condensation of Prophase Chromosomes"/>
</dbReference>
<dbReference type="Reactome" id="R-MMU-2559586">
    <property type="pathway name" value="DNA Damage/Telomere Stress Induced Senescence"/>
</dbReference>
<dbReference type="Reactome" id="R-MMU-3214815">
    <property type="pathway name" value="HDACs deacetylate histones"/>
</dbReference>
<dbReference type="Reactome" id="R-MMU-3214858">
    <property type="pathway name" value="RMTs methylate histone arginines"/>
</dbReference>
<dbReference type="Reactome" id="R-MMU-5689603">
    <property type="pathway name" value="UCH proteinases"/>
</dbReference>
<dbReference type="Reactome" id="R-MMU-5689880">
    <property type="pathway name" value="Ub-specific processing proteases"/>
</dbReference>
<dbReference type="Reactome" id="R-MMU-5689901">
    <property type="pathway name" value="Metalloprotease DUBs"/>
</dbReference>
<dbReference type="Reactome" id="R-MMU-606279">
    <property type="pathway name" value="Deposition of new CENPA-containing nucleosomes at the centromere"/>
</dbReference>
<dbReference type="Reactome" id="R-MMU-8936459">
    <property type="pathway name" value="RUNX1 regulates genes involved in megakaryocyte differentiation and platelet function"/>
</dbReference>
<dbReference type="Reactome" id="R-MMU-9018519">
    <property type="pathway name" value="Estrogen-dependent gene expression"/>
</dbReference>
<dbReference type="Reactome" id="R-MMU-9670095">
    <property type="pathway name" value="Inhibition of DNA recombination at telomere"/>
</dbReference>
<dbReference type="Reactome" id="R-MMU-9841922">
    <property type="pathway name" value="MLL4 and MLL3 complexes regulate expression of PPARG target genes in adipogenesis and hepatic steatosis"/>
</dbReference>
<dbReference type="Reactome" id="R-MMU-9843940">
    <property type="pathway name" value="Regulation of endogenous retroelements by KRAB-ZFP proteins"/>
</dbReference>
<dbReference type="BioGRID-ORCS" id="232440">
    <property type="hits" value="6 hits in 80 CRISPR screens"/>
</dbReference>
<dbReference type="ChiTaRS" id="H2afj">
    <property type="organism name" value="mouse"/>
</dbReference>
<dbReference type="PRO" id="PR:Q8R1M2"/>
<dbReference type="Proteomes" id="UP000000589">
    <property type="component" value="Chromosome 6"/>
</dbReference>
<dbReference type="RNAct" id="Q8R1M2">
    <property type="molecule type" value="protein"/>
</dbReference>
<dbReference type="Bgee" id="ENSMUSG00000060032">
    <property type="expression patterns" value="Expressed in paneth cell and 244 other cell types or tissues"/>
</dbReference>
<dbReference type="ExpressionAtlas" id="Q8R1M2">
    <property type="expression patterns" value="baseline and differential"/>
</dbReference>
<dbReference type="GO" id="GO:0000786">
    <property type="term" value="C:nucleosome"/>
    <property type="evidence" value="ECO:0007669"/>
    <property type="project" value="UniProtKB-KW"/>
</dbReference>
<dbReference type="GO" id="GO:0005634">
    <property type="term" value="C:nucleus"/>
    <property type="evidence" value="ECO:0007669"/>
    <property type="project" value="UniProtKB-SubCell"/>
</dbReference>
<dbReference type="GO" id="GO:0003677">
    <property type="term" value="F:DNA binding"/>
    <property type="evidence" value="ECO:0007669"/>
    <property type="project" value="UniProtKB-KW"/>
</dbReference>
<dbReference type="GO" id="GO:0046982">
    <property type="term" value="F:protein heterodimerization activity"/>
    <property type="evidence" value="ECO:0007669"/>
    <property type="project" value="InterPro"/>
</dbReference>
<dbReference type="GO" id="GO:0030527">
    <property type="term" value="F:structural constituent of chromatin"/>
    <property type="evidence" value="ECO:0007669"/>
    <property type="project" value="InterPro"/>
</dbReference>
<dbReference type="CDD" id="cd00074">
    <property type="entry name" value="HFD_H2A"/>
    <property type="match status" value="1"/>
</dbReference>
<dbReference type="FunFam" id="1.10.20.10:FF:000103">
    <property type="entry name" value="Histone H2A type 1"/>
    <property type="match status" value="1"/>
</dbReference>
<dbReference type="Gene3D" id="1.10.20.10">
    <property type="entry name" value="Histone, subunit A"/>
    <property type="match status" value="1"/>
</dbReference>
<dbReference type="InterPro" id="IPR009072">
    <property type="entry name" value="Histone-fold"/>
</dbReference>
<dbReference type="InterPro" id="IPR002119">
    <property type="entry name" value="Histone_H2A"/>
</dbReference>
<dbReference type="InterPro" id="IPR007125">
    <property type="entry name" value="Histone_H2A/H2B/H3"/>
</dbReference>
<dbReference type="InterPro" id="IPR032454">
    <property type="entry name" value="Histone_H2A_C"/>
</dbReference>
<dbReference type="InterPro" id="IPR032458">
    <property type="entry name" value="Histone_H2A_CS"/>
</dbReference>
<dbReference type="PANTHER" id="PTHR23430">
    <property type="entry name" value="HISTONE H2A"/>
    <property type="match status" value="1"/>
</dbReference>
<dbReference type="Pfam" id="PF00125">
    <property type="entry name" value="Histone"/>
    <property type="match status" value="1"/>
</dbReference>
<dbReference type="Pfam" id="PF16211">
    <property type="entry name" value="Histone_H2A_C"/>
    <property type="match status" value="1"/>
</dbReference>
<dbReference type="PRINTS" id="PR00620">
    <property type="entry name" value="HISTONEH2A"/>
</dbReference>
<dbReference type="SMART" id="SM00414">
    <property type="entry name" value="H2A"/>
    <property type="match status" value="1"/>
</dbReference>
<dbReference type="SUPFAM" id="SSF47113">
    <property type="entry name" value="Histone-fold"/>
    <property type="match status" value="1"/>
</dbReference>
<dbReference type="PROSITE" id="PS00046">
    <property type="entry name" value="HISTONE_H2A"/>
    <property type="match status" value="1"/>
</dbReference>
<reference key="1">
    <citation type="journal article" date="2005" name="Science">
        <title>The transcriptional landscape of the mammalian genome.</title>
        <authorList>
            <person name="Carninci P."/>
            <person name="Kasukawa T."/>
            <person name="Katayama S."/>
            <person name="Gough J."/>
            <person name="Frith M.C."/>
            <person name="Maeda N."/>
            <person name="Oyama R."/>
            <person name="Ravasi T."/>
            <person name="Lenhard B."/>
            <person name="Wells C."/>
            <person name="Kodzius R."/>
            <person name="Shimokawa K."/>
            <person name="Bajic V.B."/>
            <person name="Brenner S.E."/>
            <person name="Batalov S."/>
            <person name="Forrest A.R."/>
            <person name="Zavolan M."/>
            <person name="Davis M.J."/>
            <person name="Wilming L.G."/>
            <person name="Aidinis V."/>
            <person name="Allen J.E."/>
            <person name="Ambesi-Impiombato A."/>
            <person name="Apweiler R."/>
            <person name="Aturaliya R.N."/>
            <person name="Bailey T.L."/>
            <person name="Bansal M."/>
            <person name="Baxter L."/>
            <person name="Beisel K.W."/>
            <person name="Bersano T."/>
            <person name="Bono H."/>
            <person name="Chalk A.M."/>
            <person name="Chiu K.P."/>
            <person name="Choudhary V."/>
            <person name="Christoffels A."/>
            <person name="Clutterbuck D.R."/>
            <person name="Crowe M.L."/>
            <person name="Dalla E."/>
            <person name="Dalrymple B.P."/>
            <person name="de Bono B."/>
            <person name="Della Gatta G."/>
            <person name="di Bernardo D."/>
            <person name="Down T."/>
            <person name="Engstrom P."/>
            <person name="Fagiolini M."/>
            <person name="Faulkner G."/>
            <person name="Fletcher C.F."/>
            <person name="Fukushima T."/>
            <person name="Furuno M."/>
            <person name="Futaki S."/>
            <person name="Gariboldi M."/>
            <person name="Georgii-Hemming P."/>
            <person name="Gingeras T.R."/>
            <person name="Gojobori T."/>
            <person name="Green R.E."/>
            <person name="Gustincich S."/>
            <person name="Harbers M."/>
            <person name="Hayashi Y."/>
            <person name="Hensch T.K."/>
            <person name="Hirokawa N."/>
            <person name="Hill D."/>
            <person name="Huminiecki L."/>
            <person name="Iacono M."/>
            <person name="Ikeo K."/>
            <person name="Iwama A."/>
            <person name="Ishikawa T."/>
            <person name="Jakt M."/>
            <person name="Kanapin A."/>
            <person name="Katoh M."/>
            <person name="Kawasawa Y."/>
            <person name="Kelso J."/>
            <person name="Kitamura H."/>
            <person name="Kitano H."/>
            <person name="Kollias G."/>
            <person name="Krishnan S.P."/>
            <person name="Kruger A."/>
            <person name="Kummerfeld S.K."/>
            <person name="Kurochkin I.V."/>
            <person name="Lareau L.F."/>
            <person name="Lazarevic D."/>
            <person name="Lipovich L."/>
            <person name="Liu J."/>
            <person name="Liuni S."/>
            <person name="McWilliam S."/>
            <person name="Madan Babu M."/>
            <person name="Madera M."/>
            <person name="Marchionni L."/>
            <person name="Matsuda H."/>
            <person name="Matsuzawa S."/>
            <person name="Miki H."/>
            <person name="Mignone F."/>
            <person name="Miyake S."/>
            <person name="Morris K."/>
            <person name="Mottagui-Tabar S."/>
            <person name="Mulder N."/>
            <person name="Nakano N."/>
            <person name="Nakauchi H."/>
            <person name="Ng P."/>
            <person name="Nilsson R."/>
            <person name="Nishiguchi S."/>
            <person name="Nishikawa S."/>
            <person name="Nori F."/>
            <person name="Ohara O."/>
            <person name="Okazaki Y."/>
            <person name="Orlando V."/>
            <person name="Pang K.C."/>
            <person name="Pavan W.J."/>
            <person name="Pavesi G."/>
            <person name="Pesole G."/>
            <person name="Petrovsky N."/>
            <person name="Piazza S."/>
            <person name="Reed J."/>
            <person name="Reid J.F."/>
            <person name="Ring B.Z."/>
            <person name="Ringwald M."/>
            <person name="Rost B."/>
            <person name="Ruan Y."/>
            <person name="Salzberg S.L."/>
            <person name="Sandelin A."/>
            <person name="Schneider C."/>
            <person name="Schoenbach C."/>
            <person name="Sekiguchi K."/>
            <person name="Semple C.A."/>
            <person name="Seno S."/>
            <person name="Sessa L."/>
            <person name="Sheng Y."/>
            <person name="Shibata Y."/>
            <person name="Shimada H."/>
            <person name="Shimada K."/>
            <person name="Silva D."/>
            <person name="Sinclair B."/>
            <person name="Sperling S."/>
            <person name="Stupka E."/>
            <person name="Sugiura K."/>
            <person name="Sultana R."/>
            <person name="Takenaka Y."/>
            <person name="Taki K."/>
            <person name="Tammoja K."/>
            <person name="Tan S.L."/>
            <person name="Tang S."/>
            <person name="Taylor M.S."/>
            <person name="Tegner J."/>
            <person name="Teichmann S.A."/>
            <person name="Ueda H.R."/>
            <person name="van Nimwegen E."/>
            <person name="Verardo R."/>
            <person name="Wei C.L."/>
            <person name="Yagi K."/>
            <person name="Yamanishi H."/>
            <person name="Zabarovsky E."/>
            <person name="Zhu S."/>
            <person name="Zimmer A."/>
            <person name="Hide W."/>
            <person name="Bult C."/>
            <person name="Grimmond S.M."/>
            <person name="Teasdale R.D."/>
            <person name="Liu E.T."/>
            <person name="Brusic V."/>
            <person name="Quackenbush J."/>
            <person name="Wahlestedt C."/>
            <person name="Mattick J.S."/>
            <person name="Hume D.A."/>
            <person name="Kai C."/>
            <person name="Sasaki D."/>
            <person name="Tomaru Y."/>
            <person name="Fukuda S."/>
            <person name="Kanamori-Katayama M."/>
            <person name="Suzuki M."/>
            <person name="Aoki J."/>
            <person name="Arakawa T."/>
            <person name="Iida J."/>
            <person name="Imamura K."/>
            <person name="Itoh M."/>
            <person name="Kato T."/>
            <person name="Kawaji H."/>
            <person name="Kawagashira N."/>
            <person name="Kawashima T."/>
            <person name="Kojima M."/>
            <person name="Kondo S."/>
            <person name="Konno H."/>
            <person name="Nakano K."/>
            <person name="Ninomiya N."/>
            <person name="Nishio T."/>
            <person name="Okada M."/>
            <person name="Plessy C."/>
            <person name="Shibata K."/>
            <person name="Shiraki T."/>
            <person name="Suzuki S."/>
            <person name="Tagami M."/>
            <person name="Waki K."/>
            <person name="Watahiki A."/>
            <person name="Okamura-Oho Y."/>
            <person name="Suzuki H."/>
            <person name="Kawai J."/>
            <person name="Hayashizaki Y."/>
        </authorList>
    </citation>
    <scope>NUCLEOTIDE SEQUENCE [LARGE SCALE MRNA]</scope>
    <source>
        <strain>C57BL/6J</strain>
        <tissue>Eye</tissue>
    </source>
</reference>
<reference key="2">
    <citation type="journal article" date="2004" name="Genome Res.">
        <title>The status, quality, and expansion of the NIH full-length cDNA project: the Mammalian Gene Collection (MGC).</title>
        <authorList>
            <consortium name="The MGC Project Team"/>
        </authorList>
    </citation>
    <scope>NUCLEOTIDE SEQUENCE [LARGE SCALE MRNA]</scope>
    <source>
        <strain>FVB/N</strain>
        <tissue>Liver</tissue>
        <tissue>Mammary gland</tissue>
    </source>
</reference>
<reference key="3">
    <citation type="journal article" date="2013" name="Mol. Cell">
        <title>SIRT5-mediated lysine desuccinylation impacts diverse metabolic pathways.</title>
        <authorList>
            <person name="Park J."/>
            <person name="Chen Y."/>
            <person name="Tishkoff D.X."/>
            <person name="Peng C."/>
            <person name="Tan M."/>
            <person name="Dai L."/>
            <person name="Xie Z."/>
            <person name="Zhang Y."/>
            <person name="Zwaans B.M."/>
            <person name="Skinner M.E."/>
            <person name="Lombard D.B."/>
            <person name="Zhao Y."/>
        </authorList>
    </citation>
    <scope>ACETYLATION [LARGE SCALE ANALYSIS] AT LYS-6 AND LYS-10</scope>
    <scope>IDENTIFICATION BY MASS SPECTROMETRY [LARGE SCALE ANALYSIS]</scope>
    <source>
        <tissue>Embryonic fibroblast</tissue>
    </source>
</reference>
<keyword id="KW-0007">Acetylation</keyword>
<keyword id="KW-0158">Chromosome</keyword>
<keyword id="KW-0238">DNA-binding</keyword>
<keyword id="KW-1017">Isopeptide bond</keyword>
<keyword id="KW-0488">Methylation</keyword>
<keyword id="KW-0544">Nucleosome core</keyword>
<keyword id="KW-0539">Nucleus</keyword>
<keyword id="KW-0597">Phosphoprotein</keyword>
<keyword id="KW-1185">Reference proteome</keyword>
<keyword id="KW-0832">Ubl conjugation</keyword>
<feature type="initiator methionine" description="Removed" evidence="4">
    <location>
        <position position="1"/>
    </location>
</feature>
<feature type="chain" id="PRO_0000344249" description="Histone H2A.J">
    <location>
        <begin position="2"/>
        <end position="129"/>
    </location>
</feature>
<feature type="region of interest" description="Disordered" evidence="3">
    <location>
        <begin position="1"/>
        <end position="22"/>
    </location>
</feature>
<feature type="compositionally biased region" description="Basic residues" evidence="3">
    <location>
        <begin position="7"/>
        <end position="19"/>
    </location>
</feature>
<feature type="modified residue" description="N6-acetyllysine" evidence="6">
    <location>
        <position position="6"/>
    </location>
</feature>
<feature type="modified residue" description="N6-acetyllysine" evidence="6">
    <location>
        <position position="10"/>
    </location>
</feature>
<feature type="modified residue" description="N6-lactoyllysine; alternate" evidence="2">
    <location>
        <position position="10"/>
    </location>
</feature>
<feature type="modified residue" description="N5-methylglutamine" evidence="1">
    <location>
        <position position="105"/>
    </location>
</feature>
<feature type="modified residue" description="Phosphothreonine; by DCAF1" evidence="1">
    <location>
        <position position="121"/>
    </location>
</feature>